<comment type="function">
    <text evidence="1">Phosphorylation of dTMP to form dTDP in both de novo and salvage pathways of dTTP synthesis.</text>
</comment>
<comment type="catalytic activity">
    <reaction evidence="1">
        <text>dTMP + ATP = dTDP + ADP</text>
        <dbReference type="Rhea" id="RHEA:13517"/>
        <dbReference type="ChEBI" id="CHEBI:30616"/>
        <dbReference type="ChEBI" id="CHEBI:58369"/>
        <dbReference type="ChEBI" id="CHEBI:63528"/>
        <dbReference type="ChEBI" id="CHEBI:456216"/>
        <dbReference type="EC" id="2.7.4.9"/>
    </reaction>
</comment>
<comment type="similarity">
    <text evidence="1">Belongs to the thymidylate kinase family.</text>
</comment>
<evidence type="ECO:0000255" key="1">
    <source>
        <dbReference type="HAMAP-Rule" id="MF_00165"/>
    </source>
</evidence>
<organism>
    <name type="scientific">Brachyspira hyodysenteriae (strain ATCC 49526 / WA1)</name>
    <dbReference type="NCBI Taxonomy" id="565034"/>
    <lineage>
        <taxon>Bacteria</taxon>
        <taxon>Pseudomonadati</taxon>
        <taxon>Spirochaetota</taxon>
        <taxon>Spirochaetia</taxon>
        <taxon>Brachyspirales</taxon>
        <taxon>Brachyspiraceae</taxon>
        <taxon>Brachyspira</taxon>
    </lineage>
</organism>
<protein>
    <recommendedName>
        <fullName evidence="1">Thymidylate kinase</fullName>
        <ecNumber evidence="1">2.7.4.9</ecNumber>
    </recommendedName>
    <alternativeName>
        <fullName evidence="1">dTMP kinase</fullName>
    </alternativeName>
</protein>
<keyword id="KW-0067">ATP-binding</keyword>
<keyword id="KW-0418">Kinase</keyword>
<keyword id="KW-0545">Nucleotide biosynthesis</keyword>
<keyword id="KW-0547">Nucleotide-binding</keyword>
<keyword id="KW-0808">Transferase</keyword>
<accession>C0R1X1</accession>
<feature type="chain" id="PRO_1000123560" description="Thymidylate kinase">
    <location>
        <begin position="1"/>
        <end position="203"/>
    </location>
</feature>
<feature type="binding site" evidence="1">
    <location>
        <begin position="10"/>
        <end position="17"/>
    </location>
    <ligand>
        <name>ATP</name>
        <dbReference type="ChEBI" id="CHEBI:30616"/>
    </ligand>
</feature>
<sequence>MKGKLIVLEGIDGSGKSSIGMMLTDILNNIGIKSIYTFEPTHAYYGSKLRESMLSKDLTPEEELSLFIADRKEHIKHMIRPAINDGYVIVLDRYMHSSIAYQGAKGIDKEYIYNLHKDFILEPDLVFILHLNIETALNRIMEKRGFVDRFENKHYLEEVDKIFSSFNEPYMHHIDASKDQKSICDEILNTIKESKILPLDSLQ</sequence>
<proteinExistence type="inferred from homology"/>
<name>KTHY_BRAHW</name>
<reference key="1">
    <citation type="journal article" date="2009" name="PLoS ONE">
        <title>Genome sequence of the pathogenic intestinal spirochete Brachyspira hyodysenteriae reveals adaptations to its lifestyle in the porcine large intestine.</title>
        <authorList>
            <person name="Bellgard M.I."/>
            <person name="Wanchanthuek P."/>
            <person name="La T."/>
            <person name="Ryan K."/>
            <person name="Moolhuijzen P."/>
            <person name="Albertyn Z."/>
            <person name="Shaban B."/>
            <person name="Motro Y."/>
            <person name="Dunn D.S."/>
            <person name="Schibeci D."/>
            <person name="Hunter A."/>
            <person name="Barrero R."/>
            <person name="Phillips N.D."/>
            <person name="Hampson D.J."/>
        </authorList>
    </citation>
    <scope>NUCLEOTIDE SEQUENCE [LARGE SCALE GENOMIC DNA]</scope>
    <source>
        <strain>ATCC 49526 / WA1</strain>
    </source>
</reference>
<gene>
    <name evidence="1" type="primary">tmk</name>
    <name type="ordered locus">BHWA1_01639</name>
</gene>
<dbReference type="EC" id="2.7.4.9" evidence="1"/>
<dbReference type="EMBL" id="CP001357">
    <property type="protein sequence ID" value="ACN84109.1"/>
    <property type="molecule type" value="Genomic_DNA"/>
</dbReference>
<dbReference type="RefSeq" id="WP_012671151.1">
    <property type="nucleotide sequence ID" value="NC_012225.1"/>
</dbReference>
<dbReference type="SMR" id="C0R1X1"/>
<dbReference type="STRING" id="565034.BHWA1_01639"/>
<dbReference type="GeneID" id="63962736"/>
<dbReference type="KEGG" id="bhy:BHWA1_01639"/>
<dbReference type="eggNOG" id="COG0125">
    <property type="taxonomic scope" value="Bacteria"/>
</dbReference>
<dbReference type="HOGENOM" id="CLU_049131_1_3_12"/>
<dbReference type="Proteomes" id="UP000001803">
    <property type="component" value="Chromosome"/>
</dbReference>
<dbReference type="GO" id="GO:0005737">
    <property type="term" value="C:cytoplasm"/>
    <property type="evidence" value="ECO:0007669"/>
    <property type="project" value="TreeGrafter"/>
</dbReference>
<dbReference type="GO" id="GO:0005524">
    <property type="term" value="F:ATP binding"/>
    <property type="evidence" value="ECO:0007669"/>
    <property type="project" value="UniProtKB-UniRule"/>
</dbReference>
<dbReference type="GO" id="GO:0004798">
    <property type="term" value="F:dTMP kinase activity"/>
    <property type="evidence" value="ECO:0007669"/>
    <property type="project" value="UniProtKB-UniRule"/>
</dbReference>
<dbReference type="GO" id="GO:0006233">
    <property type="term" value="P:dTDP biosynthetic process"/>
    <property type="evidence" value="ECO:0007669"/>
    <property type="project" value="InterPro"/>
</dbReference>
<dbReference type="GO" id="GO:0006235">
    <property type="term" value="P:dTTP biosynthetic process"/>
    <property type="evidence" value="ECO:0007669"/>
    <property type="project" value="UniProtKB-UniRule"/>
</dbReference>
<dbReference type="GO" id="GO:0006227">
    <property type="term" value="P:dUDP biosynthetic process"/>
    <property type="evidence" value="ECO:0007669"/>
    <property type="project" value="TreeGrafter"/>
</dbReference>
<dbReference type="CDD" id="cd01672">
    <property type="entry name" value="TMPK"/>
    <property type="match status" value="1"/>
</dbReference>
<dbReference type="Gene3D" id="3.40.50.300">
    <property type="entry name" value="P-loop containing nucleotide triphosphate hydrolases"/>
    <property type="match status" value="1"/>
</dbReference>
<dbReference type="HAMAP" id="MF_00165">
    <property type="entry name" value="Thymidylate_kinase"/>
    <property type="match status" value="1"/>
</dbReference>
<dbReference type="InterPro" id="IPR027417">
    <property type="entry name" value="P-loop_NTPase"/>
</dbReference>
<dbReference type="InterPro" id="IPR039430">
    <property type="entry name" value="Thymidylate_kin-like_dom"/>
</dbReference>
<dbReference type="InterPro" id="IPR018095">
    <property type="entry name" value="Thymidylate_kin_CS"/>
</dbReference>
<dbReference type="InterPro" id="IPR018094">
    <property type="entry name" value="Thymidylate_kinase"/>
</dbReference>
<dbReference type="NCBIfam" id="TIGR00041">
    <property type="entry name" value="DTMP_kinase"/>
    <property type="match status" value="1"/>
</dbReference>
<dbReference type="PANTHER" id="PTHR10344">
    <property type="entry name" value="THYMIDYLATE KINASE"/>
    <property type="match status" value="1"/>
</dbReference>
<dbReference type="PANTHER" id="PTHR10344:SF4">
    <property type="entry name" value="UMP-CMP KINASE 2, MITOCHONDRIAL"/>
    <property type="match status" value="1"/>
</dbReference>
<dbReference type="Pfam" id="PF02223">
    <property type="entry name" value="Thymidylate_kin"/>
    <property type="match status" value="1"/>
</dbReference>
<dbReference type="SUPFAM" id="SSF52540">
    <property type="entry name" value="P-loop containing nucleoside triphosphate hydrolases"/>
    <property type="match status" value="1"/>
</dbReference>
<dbReference type="PROSITE" id="PS01331">
    <property type="entry name" value="THYMIDYLATE_KINASE"/>
    <property type="match status" value="1"/>
</dbReference>